<comment type="function">
    <text evidence="3">Actin is a highly conserved protein that polymerizes to produce filaments that form cross-linked networks in the cytoplasm. Polymerizes into shorter and less stable actin filaments compared to ACT2/actin-2; this is thought to facilitate gliding motility and host cell invasion. Has ATPase activity. ATP hydrolysis leads to the formation of a stable intermediate ADP-inorganic phosphate (Pi) actin, which is followed by the release of Pi. ATP hydrolysis affects filament stability; ADP-bound actin depolymerizes much faster than ATP- or ADP-Pi-bound actin. Plays an essential role during the asexual blood stage. At the segmented schizont stage, required for apicoplast migration and segregation into individual daughter merozoites. Also, required for the separation of daughter merozoites in the final stages of cytokinesis. Essential for merozoite invasion of, but not adhesion to or reorientation towards, host erythrocytes.</text>
</comment>
<comment type="catalytic activity">
    <reaction evidence="3">
        <text>ATP + H2O = ADP + phosphate + H(+)</text>
        <dbReference type="Rhea" id="RHEA:13065"/>
        <dbReference type="ChEBI" id="CHEBI:15377"/>
        <dbReference type="ChEBI" id="CHEBI:15378"/>
        <dbReference type="ChEBI" id="CHEBI:30616"/>
        <dbReference type="ChEBI" id="CHEBI:43474"/>
        <dbReference type="ChEBI" id="CHEBI:456216"/>
    </reaction>
</comment>
<comment type="activity regulation">
    <text evidence="3">ATP hydrolysis occurs in the polymeric state. Unlike for mammalian actin, ATP hydrolysis also occurs in the monomeric form and the release of inorganic phosphate (Pi) is more efficient.</text>
</comment>
<comment type="subunit">
    <text evidence="1 3">Monomer (G-actin). Oligomer (F-actin). Polymerization of globular actin (G-actin) leads to a structural filament (F-actin) in the form of a two-stranded helix. Unlike for mammalian monomeric actin, parasite monomeric actin is able to induce oligomerization in the presence of ATP or ADP. Mg(2+), which is used to coordinate ATP, is required for polymerization. Interacts with MyoA (By similarity). Interacts with DNase I with low affinity (By similarity).</text>
</comment>
<comment type="subcellular location">
    <subcellularLocation>
        <location evidence="2">Cytoplasm</location>
    </subcellularLocation>
    <subcellularLocation>
        <location evidence="2">Nucleus</location>
    </subcellularLocation>
    <subcellularLocation>
        <location evidence="3">Cytoplasm</location>
        <location evidence="3">Cytoskeleton</location>
    </subcellularLocation>
    <text evidence="2 3">During host erythrocyte invasion, filamentous actin localizes close to the junction between merozoites and the host cell. In schizonts, filamentous actin appears to connect apicoplasts (By similarity). Prior to gametocyte activation in the mosquito midgut, localizes to both the cytoplasm and the nucleus. Following gametocyte activation, relocalizes completely to the cytoplasm, in an ACT2-dependent manner (By similarity).</text>
</comment>
<comment type="developmental stage">
    <text evidence="4">Actin-1 is formed in all parasitic stages; asexual blood stages and in the sexual stages. Actin-2 is stage-specific, formed only in the sexual stages of the parasite's life cycle.</text>
</comment>
<comment type="miscellaneous">
    <text evidence="3">A potassium ion appears to reside in the active site during hydrolysis and leaves together with the inorganic phosphate Pi. K(+) does not activate Pi release; however, it may be relevant for ATP hydrolysis.</text>
</comment>
<comment type="miscellaneous">
    <text evidence="3">ACT1 and ACT2 differ in their polymerization, filament stability and helical structure. Unlike mammalian actin, Apicomplexa actins do not form long and stable filaments.</text>
</comment>
<comment type="similarity">
    <text evidence="6">Belongs to the actin family.</text>
</comment>
<accession>P10988</accession>
<dbReference type="EC" id="3.6.4.-" evidence="3"/>
<dbReference type="EMBL" id="M19146">
    <property type="protein sequence ID" value="AAA29464.1"/>
    <property type="molecule type" value="mRNA"/>
</dbReference>
<dbReference type="EMBL" id="M22719">
    <property type="protein sequence ID" value="AAA29465.1"/>
    <property type="molecule type" value="Genomic_DNA"/>
</dbReference>
<dbReference type="PIR" id="A54496">
    <property type="entry name" value="A54496"/>
</dbReference>
<dbReference type="SMR" id="P10988"/>
<dbReference type="GO" id="GO:0005884">
    <property type="term" value="C:actin filament"/>
    <property type="evidence" value="ECO:0000250"/>
    <property type="project" value="UniProtKB"/>
</dbReference>
<dbReference type="GO" id="GO:0005737">
    <property type="term" value="C:cytoplasm"/>
    <property type="evidence" value="ECO:0007669"/>
    <property type="project" value="UniProtKB-SubCell"/>
</dbReference>
<dbReference type="GO" id="GO:0005634">
    <property type="term" value="C:nucleus"/>
    <property type="evidence" value="ECO:0007669"/>
    <property type="project" value="UniProtKB-SubCell"/>
</dbReference>
<dbReference type="GO" id="GO:0005524">
    <property type="term" value="F:ATP binding"/>
    <property type="evidence" value="ECO:0007669"/>
    <property type="project" value="UniProtKB-KW"/>
</dbReference>
<dbReference type="GO" id="GO:0016787">
    <property type="term" value="F:hydrolase activity"/>
    <property type="evidence" value="ECO:0007669"/>
    <property type="project" value="UniProtKB-KW"/>
</dbReference>
<dbReference type="GO" id="GO:0005200">
    <property type="term" value="F:structural constituent of cytoskeleton"/>
    <property type="evidence" value="ECO:0000250"/>
    <property type="project" value="UniProtKB"/>
</dbReference>
<dbReference type="GO" id="GO:0070360">
    <property type="term" value="P:symbiont-mediated actin polymerization-dependent cell-to-cell migration in host"/>
    <property type="evidence" value="ECO:0000250"/>
    <property type="project" value="UniProtKB"/>
</dbReference>
<dbReference type="CDD" id="cd10224">
    <property type="entry name" value="ASKHA_NBD_actin"/>
    <property type="match status" value="1"/>
</dbReference>
<dbReference type="FunFam" id="3.30.420.40:FF:000050">
    <property type="entry name" value="Actin, alpha skeletal muscle"/>
    <property type="match status" value="1"/>
</dbReference>
<dbReference type="FunFam" id="3.30.420.40:FF:000205">
    <property type="entry name" value="Actin, alpha skeletal muscle"/>
    <property type="match status" value="1"/>
</dbReference>
<dbReference type="FunFam" id="3.90.640.10:FF:000001">
    <property type="entry name" value="Actin, muscle"/>
    <property type="match status" value="1"/>
</dbReference>
<dbReference type="FunFam" id="3.30.420.40:FF:000404">
    <property type="entry name" value="Major actin"/>
    <property type="match status" value="1"/>
</dbReference>
<dbReference type="FunFam" id="3.30.420.40:FF:000058">
    <property type="entry name" value="Putative actin-related protein 5"/>
    <property type="match status" value="1"/>
</dbReference>
<dbReference type="Gene3D" id="3.30.420.40">
    <property type="match status" value="2"/>
</dbReference>
<dbReference type="Gene3D" id="3.90.640.10">
    <property type="entry name" value="Actin, Chain A, domain 4"/>
    <property type="match status" value="1"/>
</dbReference>
<dbReference type="InterPro" id="IPR004000">
    <property type="entry name" value="Actin"/>
</dbReference>
<dbReference type="InterPro" id="IPR020902">
    <property type="entry name" value="Actin/actin-like_CS"/>
</dbReference>
<dbReference type="InterPro" id="IPR004001">
    <property type="entry name" value="Actin_CS"/>
</dbReference>
<dbReference type="InterPro" id="IPR043129">
    <property type="entry name" value="ATPase_NBD"/>
</dbReference>
<dbReference type="PANTHER" id="PTHR11937">
    <property type="entry name" value="ACTIN"/>
    <property type="match status" value="1"/>
</dbReference>
<dbReference type="Pfam" id="PF00022">
    <property type="entry name" value="Actin"/>
    <property type="match status" value="1"/>
</dbReference>
<dbReference type="PRINTS" id="PR00190">
    <property type="entry name" value="ACTIN"/>
</dbReference>
<dbReference type="SMART" id="SM00268">
    <property type="entry name" value="ACTIN"/>
    <property type="match status" value="1"/>
</dbReference>
<dbReference type="SUPFAM" id="SSF53067">
    <property type="entry name" value="Actin-like ATPase domain"/>
    <property type="match status" value="2"/>
</dbReference>
<dbReference type="PROSITE" id="PS00406">
    <property type="entry name" value="ACTINS_1"/>
    <property type="match status" value="1"/>
</dbReference>
<dbReference type="PROSITE" id="PS00432">
    <property type="entry name" value="ACTINS_2"/>
    <property type="match status" value="1"/>
</dbReference>
<dbReference type="PROSITE" id="PS01132">
    <property type="entry name" value="ACTINS_ACT_LIKE"/>
    <property type="match status" value="1"/>
</dbReference>
<proteinExistence type="evidence at transcript level"/>
<sequence>MGEEVVQALVVDNGSGNVKAGVAGDDAPRSVFPSIVGRPKNPGIMVGMEEKDAFVGDEAQTKRGILTLKYPIEHGIVTNWDDMEKIWHHTFYNELRAAPEEHPVLLTEAPLNPKGNRERMTQIMFESFNVPAMYVAIQAVLSLYSSGRTTGIVLDSGDGVSHTVPIYEGYALPHAIMRLDLAGRDLTEYLMKILHERGYGFSTSAEKEIVRDIKEKLCYIALNFDEEMKTSEQSSDIEKSYELPDGNIITVGNERFRCPEALFQPSFLGKEAAGIHTTTFNSIKKCDVDIRKDLYGNIVLSGGTTMYEGTGERLTRDITTLAPSTMKIKVVAPPERKYSVWIGGSILSSLSTFQQMWITKEEYDESGPSIVHRKCF</sequence>
<organism>
    <name type="scientific">Plasmodium falciparum (isolate NF54)</name>
    <dbReference type="NCBI Taxonomy" id="5843"/>
    <lineage>
        <taxon>Eukaryota</taxon>
        <taxon>Sar</taxon>
        <taxon>Alveolata</taxon>
        <taxon>Apicomplexa</taxon>
        <taxon>Aconoidasida</taxon>
        <taxon>Haemosporida</taxon>
        <taxon>Plasmodiidae</taxon>
        <taxon>Plasmodium</taxon>
        <taxon>Plasmodium (Laverania)</taxon>
    </lineage>
</organism>
<protein>
    <recommendedName>
        <fullName evidence="3">Actin-1</fullName>
        <ecNumber evidence="3">3.6.4.-</ecNumber>
    </recommendedName>
    <alternativeName>
        <fullName evidence="5">Actin I</fullName>
        <shortName evidence="5">pf-actin I</shortName>
    </alternativeName>
</protein>
<gene>
    <name evidence="3" type="primary">ACT1</name>
    <name evidence="3" type="synonym">ACTI</name>
</gene>
<feature type="chain" id="PRO_0000088994" description="Actin-1">
    <location>
        <begin position="1"/>
        <end position="376"/>
    </location>
</feature>
<feature type="region of interest" description="DNAseI-binding D loop; regulates polymerization and stability of the actin filament" evidence="2">
    <location>
        <begin position="40"/>
        <end position="61"/>
    </location>
</feature>
<feature type="binding site" evidence="3">
    <location>
        <position position="15"/>
    </location>
    <ligand>
        <name>ATP</name>
        <dbReference type="ChEBI" id="CHEBI:30616"/>
    </ligand>
</feature>
<feature type="binding site" evidence="3">
    <location>
        <position position="16"/>
    </location>
    <ligand>
        <name>ATP</name>
        <dbReference type="ChEBI" id="CHEBI:30616"/>
    </ligand>
</feature>
<feature type="binding site" evidence="3">
    <location>
        <position position="17"/>
    </location>
    <ligand>
        <name>ATP</name>
        <dbReference type="ChEBI" id="CHEBI:30616"/>
    </ligand>
</feature>
<feature type="binding site" evidence="3">
    <location>
        <position position="19"/>
    </location>
    <ligand>
        <name>ATP</name>
        <dbReference type="ChEBI" id="CHEBI:30616"/>
    </ligand>
</feature>
<feature type="binding site" evidence="3">
    <location>
        <position position="158"/>
    </location>
    <ligand>
        <name>ATP</name>
        <dbReference type="ChEBI" id="CHEBI:30616"/>
    </ligand>
</feature>
<feature type="binding site" evidence="3">
    <location>
        <position position="159"/>
    </location>
    <ligand>
        <name>ATP</name>
        <dbReference type="ChEBI" id="CHEBI:30616"/>
    </ligand>
</feature>
<feature type="binding site" evidence="3">
    <location>
        <position position="160"/>
    </location>
    <ligand>
        <name>ATP</name>
        <dbReference type="ChEBI" id="CHEBI:30616"/>
    </ligand>
</feature>
<feature type="binding site" evidence="3">
    <location>
        <position position="214"/>
    </location>
    <ligand>
        <name>ATP</name>
        <dbReference type="ChEBI" id="CHEBI:30616"/>
    </ligand>
</feature>
<feature type="binding site" evidence="3">
    <location>
        <position position="215"/>
    </location>
    <ligand>
        <name>ATP</name>
        <dbReference type="ChEBI" id="CHEBI:30616"/>
    </ligand>
</feature>
<feature type="binding site" evidence="3">
    <location>
        <position position="303"/>
    </location>
    <ligand>
        <name>ATP</name>
        <dbReference type="ChEBI" id="CHEBI:30616"/>
    </ligand>
</feature>
<name>ACT1_PLAFO</name>
<keyword id="KW-0067">ATP-binding</keyword>
<keyword id="KW-0963">Cytoplasm</keyword>
<keyword id="KW-0206">Cytoskeleton</keyword>
<keyword id="KW-0378">Hydrolase</keyword>
<keyword id="KW-0547">Nucleotide-binding</keyword>
<keyword id="KW-0539">Nucleus</keyword>
<evidence type="ECO:0000250" key="1">
    <source>
        <dbReference type="UniProtKB" id="P86287"/>
    </source>
</evidence>
<evidence type="ECO:0000250" key="2">
    <source>
        <dbReference type="UniProtKB" id="Q4Z1L3"/>
    </source>
</evidence>
<evidence type="ECO:0000250" key="3">
    <source>
        <dbReference type="UniProtKB" id="Q8I4X0"/>
    </source>
</evidence>
<evidence type="ECO:0000269" key="4">
    <source>
    </source>
</evidence>
<evidence type="ECO:0000303" key="5">
    <source>
    </source>
</evidence>
<evidence type="ECO:0000305" key="6"/>
<reference key="1">
    <citation type="journal article" date="1988" name="Mol. Biochem. Parasitol.">
        <title>Nucleotide sequence and deduced amino acid sequence of a Plasmodium falciparum actin gene.</title>
        <authorList>
            <person name="Wesseling J.G."/>
            <person name="de Ree J.M."/>
            <person name="Ponnudurai T."/>
            <person name="Smits M.A."/>
            <person name="Schoenmakers J.G.G."/>
        </authorList>
    </citation>
    <scope>NUCLEOTIDE SEQUENCE [GENOMIC DNA / MRNA]</scope>
</reference>
<reference key="2">
    <citation type="journal article" date="1988" name="Mol. Biochem. Parasitol.">
        <title>Extremely diverged actin proteins in Plasmodium falciparum.</title>
        <authorList>
            <person name="Wesseling J.G."/>
            <person name="Smits M.A."/>
            <person name="Schoenmakers J.G.G."/>
        </authorList>
    </citation>
    <scope>NUCLEOTIDE SEQUENCE [MRNA]</scope>
    <scope>DEVELOPMENTAL STAGE</scope>
</reference>